<sequence length="245" mass="28309">MIKLVLIRHGQSLWNLENRFTGWTDVDLSENGLSEAREAGAILKKNGYTFDVAYTSVLKRAIRTLWIVLHEMNLAWVPVHKSWKLNERHYGALQGLNKDETAQKYGEEQVHIWRRSIDVRPPALTEDDPRYEMNDPRYKTLKKGEFPLTECLVDTEKRVLAYWHSEIAPKLKDGNKVIISSHGNTIRSLVKYLDNLSSDGVVSLNIPTSIPLVYELDENLRPIRHYYLSMDGEVPEGEIPKHITF</sequence>
<accession>Q6HIL9</accession>
<gene>
    <name evidence="1" type="primary">gpmA</name>
    <name type="ordered locus">BT9727_2281</name>
</gene>
<protein>
    <recommendedName>
        <fullName evidence="1">2,3-bisphosphoglycerate-dependent phosphoglycerate mutase</fullName>
        <shortName evidence="1">BPG-dependent PGAM</shortName>
        <shortName evidence="1">PGAM</shortName>
        <shortName evidence="1">Phosphoglyceromutase</shortName>
        <shortName evidence="1">dPGM</shortName>
        <ecNumber evidence="1">5.4.2.11</ecNumber>
    </recommendedName>
</protein>
<dbReference type="EC" id="5.4.2.11" evidence="1"/>
<dbReference type="EMBL" id="AE017355">
    <property type="protein sequence ID" value="AAT61449.1"/>
    <property type="molecule type" value="Genomic_DNA"/>
</dbReference>
<dbReference type="RefSeq" id="WP_000594156.1">
    <property type="nucleotide sequence ID" value="NC_005957.1"/>
</dbReference>
<dbReference type="RefSeq" id="YP_036607.1">
    <property type="nucleotide sequence ID" value="NC_005957.1"/>
</dbReference>
<dbReference type="SMR" id="Q6HIL9"/>
<dbReference type="KEGG" id="btk:BT9727_2281"/>
<dbReference type="PATRIC" id="fig|281309.8.peg.2411"/>
<dbReference type="HOGENOM" id="CLU_033323_1_1_9"/>
<dbReference type="UniPathway" id="UPA00109">
    <property type="reaction ID" value="UER00186"/>
</dbReference>
<dbReference type="Proteomes" id="UP000001301">
    <property type="component" value="Chromosome"/>
</dbReference>
<dbReference type="GO" id="GO:0004619">
    <property type="term" value="F:phosphoglycerate mutase activity"/>
    <property type="evidence" value="ECO:0007669"/>
    <property type="project" value="UniProtKB-EC"/>
</dbReference>
<dbReference type="GO" id="GO:0006094">
    <property type="term" value="P:gluconeogenesis"/>
    <property type="evidence" value="ECO:0007669"/>
    <property type="project" value="UniProtKB-UniRule"/>
</dbReference>
<dbReference type="GO" id="GO:0006096">
    <property type="term" value="P:glycolytic process"/>
    <property type="evidence" value="ECO:0007669"/>
    <property type="project" value="UniProtKB-UniRule"/>
</dbReference>
<dbReference type="CDD" id="cd07067">
    <property type="entry name" value="HP_PGM_like"/>
    <property type="match status" value="1"/>
</dbReference>
<dbReference type="FunFam" id="3.40.50.1240:FF:000003">
    <property type="entry name" value="2,3-bisphosphoglycerate-dependent phosphoglycerate mutase"/>
    <property type="match status" value="1"/>
</dbReference>
<dbReference type="Gene3D" id="3.40.50.1240">
    <property type="entry name" value="Phosphoglycerate mutase-like"/>
    <property type="match status" value="1"/>
</dbReference>
<dbReference type="HAMAP" id="MF_01039">
    <property type="entry name" value="PGAM_GpmA"/>
    <property type="match status" value="1"/>
</dbReference>
<dbReference type="InterPro" id="IPR013078">
    <property type="entry name" value="His_Pase_superF_clade-1"/>
</dbReference>
<dbReference type="InterPro" id="IPR029033">
    <property type="entry name" value="His_PPase_superfam"/>
</dbReference>
<dbReference type="InterPro" id="IPR001345">
    <property type="entry name" value="PG/BPGM_mutase_AS"/>
</dbReference>
<dbReference type="InterPro" id="IPR005952">
    <property type="entry name" value="Phosphogly_mut1"/>
</dbReference>
<dbReference type="NCBIfam" id="TIGR01258">
    <property type="entry name" value="pgm_1"/>
    <property type="match status" value="1"/>
</dbReference>
<dbReference type="NCBIfam" id="NF010713">
    <property type="entry name" value="PRK14115.1"/>
    <property type="match status" value="1"/>
</dbReference>
<dbReference type="PANTHER" id="PTHR11931">
    <property type="entry name" value="PHOSPHOGLYCERATE MUTASE"/>
    <property type="match status" value="1"/>
</dbReference>
<dbReference type="Pfam" id="PF00300">
    <property type="entry name" value="His_Phos_1"/>
    <property type="match status" value="1"/>
</dbReference>
<dbReference type="PIRSF" id="PIRSF000709">
    <property type="entry name" value="6PFK_2-Ptase"/>
    <property type="match status" value="1"/>
</dbReference>
<dbReference type="SMART" id="SM00855">
    <property type="entry name" value="PGAM"/>
    <property type="match status" value="1"/>
</dbReference>
<dbReference type="SUPFAM" id="SSF53254">
    <property type="entry name" value="Phosphoglycerate mutase-like"/>
    <property type="match status" value="1"/>
</dbReference>
<dbReference type="PROSITE" id="PS00175">
    <property type="entry name" value="PG_MUTASE"/>
    <property type="match status" value="1"/>
</dbReference>
<comment type="function">
    <text evidence="1">Catalyzes the interconversion of 2-phosphoglycerate and 3-phosphoglycerate.</text>
</comment>
<comment type="catalytic activity">
    <reaction evidence="1">
        <text>(2R)-2-phosphoglycerate = (2R)-3-phosphoglycerate</text>
        <dbReference type="Rhea" id="RHEA:15901"/>
        <dbReference type="ChEBI" id="CHEBI:58272"/>
        <dbReference type="ChEBI" id="CHEBI:58289"/>
        <dbReference type="EC" id="5.4.2.11"/>
    </reaction>
</comment>
<comment type="pathway">
    <text evidence="1">Carbohydrate degradation; glycolysis; pyruvate from D-glyceraldehyde 3-phosphate: step 3/5.</text>
</comment>
<comment type="similarity">
    <text evidence="1">Belongs to the phosphoglycerate mutase family. BPG-dependent PGAM subfamily.</text>
</comment>
<feature type="chain" id="PRO_0000229103" description="2,3-bisphosphoglycerate-dependent phosphoglycerate mutase">
    <location>
        <begin position="1"/>
        <end position="245"/>
    </location>
</feature>
<feature type="active site" description="Tele-phosphohistidine intermediate" evidence="1">
    <location>
        <position position="9"/>
    </location>
</feature>
<feature type="active site" description="Proton donor/acceptor" evidence="1">
    <location>
        <position position="87"/>
    </location>
</feature>
<feature type="binding site" evidence="1">
    <location>
        <begin position="8"/>
        <end position="15"/>
    </location>
    <ligand>
        <name>substrate</name>
    </ligand>
</feature>
<feature type="binding site" evidence="1">
    <location>
        <begin position="21"/>
        <end position="22"/>
    </location>
    <ligand>
        <name>substrate</name>
    </ligand>
</feature>
<feature type="binding site" evidence="1">
    <location>
        <position position="60"/>
    </location>
    <ligand>
        <name>substrate</name>
    </ligand>
</feature>
<feature type="binding site" evidence="1">
    <location>
        <begin position="87"/>
        <end position="90"/>
    </location>
    <ligand>
        <name>substrate</name>
    </ligand>
</feature>
<feature type="binding site" evidence="1">
    <location>
        <position position="98"/>
    </location>
    <ligand>
        <name>substrate</name>
    </ligand>
</feature>
<feature type="binding site" evidence="1">
    <location>
        <begin position="114"/>
        <end position="115"/>
    </location>
    <ligand>
        <name>substrate</name>
    </ligand>
</feature>
<feature type="binding site" evidence="1">
    <location>
        <begin position="183"/>
        <end position="184"/>
    </location>
    <ligand>
        <name>substrate</name>
    </ligand>
</feature>
<feature type="site" description="Transition state stabilizer" evidence="1">
    <location>
        <position position="182"/>
    </location>
</feature>
<reference key="1">
    <citation type="journal article" date="2006" name="J. Bacteriol.">
        <title>Pathogenomic sequence analysis of Bacillus cereus and Bacillus thuringiensis isolates closely related to Bacillus anthracis.</title>
        <authorList>
            <person name="Han C.S."/>
            <person name="Xie G."/>
            <person name="Challacombe J.F."/>
            <person name="Altherr M.R."/>
            <person name="Bhotika S.S."/>
            <person name="Bruce D."/>
            <person name="Campbell C.S."/>
            <person name="Campbell M.L."/>
            <person name="Chen J."/>
            <person name="Chertkov O."/>
            <person name="Cleland C."/>
            <person name="Dimitrijevic M."/>
            <person name="Doggett N.A."/>
            <person name="Fawcett J.J."/>
            <person name="Glavina T."/>
            <person name="Goodwin L.A."/>
            <person name="Hill K.K."/>
            <person name="Hitchcock P."/>
            <person name="Jackson P.J."/>
            <person name="Keim P."/>
            <person name="Kewalramani A.R."/>
            <person name="Longmire J."/>
            <person name="Lucas S."/>
            <person name="Malfatti S."/>
            <person name="McMurry K."/>
            <person name="Meincke L.J."/>
            <person name="Misra M."/>
            <person name="Moseman B.L."/>
            <person name="Mundt M."/>
            <person name="Munk A.C."/>
            <person name="Okinaka R.T."/>
            <person name="Parson-Quintana B."/>
            <person name="Reilly L.P."/>
            <person name="Richardson P."/>
            <person name="Robinson D.L."/>
            <person name="Rubin E."/>
            <person name="Saunders E."/>
            <person name="Tapia R."/>
            <person name="Tesmer J.G."/>
            <person name="Thayer N."/>
            <person name="Thompson L.S."/>
            <person name="Tice H."/>
            <person name="Ticknor L.O."/>
            <person name="Wills P.L."/>
            <person name="Brettin T.S."/>
            <person name="Gilna P."/>
        </authorList>
    </citation>
    <scope>NUCLEOTIDE SEQUENCE [LARGE SCALE GENOMIC DNA]</scope>
    <source>
        <strain>97-27</strain>
    </source>
</reference>
<keyword id="KW-0312">Gluconeogenesis</keyword>
<keyword id="KW-0324">Glycolysis</keyword>
<keyword id="KW-0413">Isomerase</keyword>
<organism>
    <name type="scientific">Bacillus thuringiensis subsp. konkukian (strain 97-27)</name>
    <dbReference type="NCBI Taxonomy" id="281309"/>
    <lineage>
        <taxon>Bacteria</taxon>
        <taxon>Bacillati</taxon>
        <taxon>Bacillota</taxon>
        <taxon>Bacilli</taxon>
        <taxon>Bacillales</taxon>
        <taxon>Bacillaceae</taxon>
        <taxon>Bacillus</taxon>
        <taxon>Bacillus cereus group</taxon>
    </lineage>
</organism>
<name>GPMA_BACHK</name>
<evidence type="ECO:0000255" key="1">
    <source>
        <dbReference type="HAMAP-Rule" id="MF_01039"/>
    </source>
</evidence>
<proteinExistence type="inferred from homology"/>